<organism>
    <name type="scientific">Salmonella paratyphi C (strain RKS4594)</name>
    <dbReference type="NCBI Taxonomy" id="476213"/>
    <lineage>
        <taxon>Bacteria</taxon>
        <taxon>Pseudomonadati</taxon>
        <taxon>Pseudomonadota</taxon>
        <taxon>Gammaproteobacteria</taxon>
        <taxon>Enterobacterales</taxon>
        <taxon>Enterobacteriaceae</taxon>
        <taxon>Salmonella</taxon>
    </lineage>
</organism>
<dbReference type="EC" id="7.4.2.8" evidence="1"/>
<dbReference type="EMBL" id="CP000857">
    <property type="protein sequence ID" value="ACN44336.1"/>
    <property type="molecule type" value="Genomic_DNA"/>
</dbReference>
<dbReference type="RefSeq" id="WP_000905756.1">
    <property type="nucleotide sequence ID" value="NC_012125.1"/>
</dbReference>
<dbReference type="SMR" id="C0Q5J4"/>
<dbReference type="KEGG" id="sei:SPC_0145"/>
<dbReference type="HOGENOM" id="CLU_005314_3_0_6"/>
<dbReference type="Proteomes" id="UP000001599">
    <property type="component" value="Chromosome"/>
</dbReference>
<dbReference type="GO" id="GO:0031522">
    <property type="term" value="C:cell envelope Sec protein transport complex"/>
    <property type="evidence" value="ECO:0007669"/>
    <property type="project" value="TreeGrafter"/>
</dbReference>
<dbReference type="GO" id="GO:0005829">
    <property type="term" value="C:cytosol"/>
    <property type="evidence" value="ECO:0007669"/>
    <property type="project" value="TreeGrafter"/>
</dbReference>
<dbReference type="GO" id="GO:0005886">
    <property type="term" value="C:plasma membrane"/>
    <property type="evidence" value="ECO:0007669"/>
    <property type="project" value="UniProtKB-SubCell"/>
</dbReference>
<dbReference type="GO" id="GO:0005524">
    <property type="term" value="F:ATP binding"/>
    <property type="evidence" value="ECO:0007669"/>
    <property type="project" value="UniProtKB-UniRule"/>
</dbReference>
<dbReference type="GO" id="GO:0046872">
    <property type="term" value="F:metal ion binding"/>
    <property type="evidence" value="ECO:0007669"/>
    <property type="project" value="UniProtKB-KW"/>
</dbReference>
<dbReference type="GO" id="GO:0008564">
    <property type="term" value="F:protein-exporting ATPase activity"/>
    <property type="evidence" value="ECO:0007669"/>
    <property type="project" value="UniProtKB-EC"/>
</dbReference>
<dbReference type="GO" id="GO:0065002">
    <property type="term" value="P:intracellular protein transmembrane transport"/>
    <property type="evidence" value="ECO:0007669"/>
    <property type="project" value="UniProtKB-UniRule"/>
</dbReference>
<dbReference type="GO" id="GO:0017038">
    <property type="term" value="P:protein import"/>
    <property type="evidence" value="ECO:0007669"/>
    <property type="project" value="InterPro"/>
</dbReference>
<dbReference type="GO" id="GO:0006605">
    <property type="term" value="P:protein targeting"/>
    <property type="evidence" value="ECO:0007669"/>
    <property type="project" value="UniProtKB-UniRule"/>
</dbReference>
<dbReference type="GO" id="GO:0043952">
    <property type="term" value="P:protein transport by the Sec complex"/>
    <property type="evidence" value="ECO:0007669"/>
    <property type="project" value="TreeGrafter"/>
</dbReference>
<dbReference type="CDD" id="cd17928">
    <property type="entry name" value="DEXDc_SecA"/>
    <property type="match status" value="1"/>
</dbReference>
<dbReference type="CDD" id="cd18803">
    <property type="entry name" value="SF2_C_secA"/>
    <property type="match status" value="1"/>
</dbReference>
<dbReference type="FunFam" id="1.10.3060.10:FF:000001">
    <property type="entry name" value="Preprotein translocase subunit SecA"/>
    <property type="match status" value="1"/>
</dbReference>
<dbReference type="FunFam" id="3.40.50.300:FF:000081">
    <property type="entry name" value="Preprotein translocase subunit SecA"/>
    <property type="match status" value="1"/>
</dbReference>
<dbReference type="FunFam" id="3.40.50.300:FF:000113">
    <property type="entry name" value="Preprotein translocase subunit SecA"/>
    <property type="match status" value="1"/>
</dbReference>
<dbReference type="FunFam" id="3.90.1440.10:FF:000001">
    <property type="entry name" value="Preprotein translocase subunit SecA"/>
    <property type="match status" value="1"/>
</dbReference>
<dbReference type="Gene3D" id="1.10.3060.10">
    <property type="entry name" value="Helical scaffold and wing domains of SecA"/>
    <property type="match status" value="1"/>
</dbReference>
<dbReference type="Gene3D" id="3.40.50.300">
    <property type="entry name" value="P-loop containing nucleotide triphosphate hydrolases"/>
    <property type="match status" value="2"/>
</dbReference>
<dbReference type="Gene3D" id="3.90.1440.10">
    <property type="entry name" value="SecA, preprotein cross-linking domain"/>
    <property type="match status" value="1"/>
</dbReference>
<dbReference type="HAMAP" id="MF_01382">
    <property type="entry name" value="SecA"/>
    <property type="match status" value="1"/>
</dbReference>
<dbReference type="InterPro" id="IPR014001">
    <property type="entry name" value="Helicase_ATP-bd"/>
</dbReference>
<dbReference type="InterPro" id="IPR027417">
    <property type="entry name" value="P-loop_NTPase"/>
</dbReference>
<dbReference type="InterPro" id="IPR004027">
    <property type="entry name" value="SEC_C_motif"/>
</dbReference>
<dbReference type="InterPro" id="IPR000185">
    <property type="entry name" value="SecA"/>
</dbReference>
<dbReference type="InterPro" id="IPR020937">
    <property type="entry name" value="SecA_CS"/>
</dbReference>
<dbReference type="InterPro" id="IPR011115">
    <property type="entry name" value="SecA_DEAD"/>
</dbReference>
<dbReference type="InterPro" id="IPR014018">
    <property type="entry name" value="SecA_motor_DEAD"/>
</dbReference>
<dbReference type="InterPro" id="IPR011130">
    <property type="entry name" value="SecA_preprotein_X-link_dom"/>
</dbReference>
<dbReference type="InterPro" id="IPR044722">
    <property type="entry name" value="SecA_SF2_C"/>
</dbReference>
<dbReference type="InterPro" id="IPR011116">
    <property type="entry name" value="SecA_Wing/Scaffold"/>
</dbReference>
<dbReference type="InterPro" id="IPR036266">
    <property type="entry name" value="SecA_Wing/Scaffold_sf"/>
</dbReference>
<dbReference type="InterPro" id="IPR036670">
    <property type="entry name" value="SecA_X-link_sf"/>
</dbReference>
<dbReference type="NCBIfam" id="NF009538">
    <property type="entry name" value="PRK12904.1"/>
    <property type="match status" value="1"/>
</dbReference>
<dbReference type="NCBIfam" id="TIGR00963">
    <property type="entry name" value="secA"/>
    <property type="match status" value="1"/>
</dbReference>
<dbReference type="PANTHER" id="PTHR30612:SF0">
    <property type="entry name" value="CHLOROPLAST PROTEIN-TRANSPORTING ATPASE"/>
    <property type="match status" value="1"/>
</dbReference>
<dbReference type="PANTHER" id="PTHR30612">
    <property type="entry name" value="SECA INNER MEMBRANE COMPONENT OF SEC PROTEIN SECRETION SYSTEM"/>
    <property type="match status" value="1"/>
</dbReference>
<dbReference type="Pfam" id="PF21090">
    <property type="entry name" value="P-loop_SecA"/>
    <property type="match status" value="1"/>
</dbReference>
<dbReference type="Pfam" id="PF02810">
    <property type="entry name" value="SEC-C"/>
    <property type="match status" value="1"/>
</dbReference>
<dbReference type="Pfam" id="PF07517">
    <property type="entry name" value="SecA_DEAD"/>
    <property type="match status" value="1"/>
</dbReference>
<dbReference type="Pfam" id="PF01043">
    <property type="entry name" value="SecA_PP_bind"/>
    <property type="match status" value="1"/>
</dbReference>
<dbReference type="Pfam" id="PF07516">
    <property type="entry name" value="SecA_SW"/>
    <property type="match status" value="1"/>
</dbReference>
<dbReference type="PRINTS" id="PR00906">
    <property type="entry name" value="SECA"/>
</dbReference>
<dbReference type="SMART" id="SM00957">
    <property type="entry name" value="SecA_DEAD"/>
    <property type="match status" value="1"/>
</dbReference>
<dbReference type="SMART" id="SM00958">
    <property type="entry name" value="SecA_PP_bind"/>
    <property type="match status" value="1"/>
</dbReference>
<dbReference type="SUPFAM" id="SSF81886">
    <property type="entry name" value="Helical scaffold and wing domains of SecA"/>
    <property type="match status" value="1"/>
</dbReference>
<dbReference type="SUPFAM" id="SSF52540">
    <property type="entry name" value="P-loop containing nucleoside triphosphate hydrolases"/>
    <property type="match status" value="2"/>
</dbReference>
<dbReference type="SUPFAM" id="SSF81767">
    <property type="entry name" value="Pre-protein crosslinking domain of SecA"/>
    <property type="match status" value="1"/>
</dbReference>
<dbReference type="PROSITE" id="PS01312">
    <property type="entry name" value="SECA"/>
    <property type="match status" value="1"/>
</dbReference>
<dbReference type="PROSITE" id="PS51196">
    <property type="entry name" value="SECA_MOTOR_DEAD"/>
    <property type="match status" value="1"/>
</dbReference>
<keyword id="KW-0067">ATP-binding</keyword>
<keyword id="KW-0997">Cell inner membrane</keyword>
<keyword id="KW-1003">Cell membrane</keyword>
<keyword id="KW-0963">Cytoplasm</keyword>
<keyword id="KW-0472">Membrane</keyword>
<keyword id="KW-0479">Metal-binding</keyword>
<keyword id="KW-0547">Nucleotide-binding</keyword>
<keyword id="KW-0653">Protein transport</keyword>
<keyword id="KW-1278">Translocase</keyword>
<keyword id="KW-0811">Translocation</keyword>
<keyword id="KW-0813">Transport</keyword>
<keyword id="KW-0862">Zinc</keyword>
<accession>C0Q5J4</accession>
<proteinExistence type="inferred from homology"/>
<comment type="function">
    <text evidence="1">Part of the Sec protein translocase complex. Interacts with the SecYEG preprotein conducting channel. Has a central role in coupling the hydrolysis of ATP to the transfer of proteins into and across the cell membrane, serving both as a receptor for the preprotein-SecB complex and as an ATP-driven molecular motor driving the stepwise translocation of polypeptide chains across the membrane.</text>
</comment>
<comment type="catalytic activity">
    <reaction evidence="1">
        <text>ATP + H2O + cellular proteinSide 1 = ADP + phosphate + cellular proteinSide 2.</text>
        <dbReference type="EC" id="7.4.2.8"/>
    </reaction>
</comment>
<comment type="cofactor">
    <cofactor evidence="1">
        <name>Zn(2+)</name>
        <dbReference type="ChEBI" id="CHEBI:29105"/>
    </cofactor>
    <text evidence="1">May bind 1 zinc ion per subunit.</text>
</comment>
<comment type="subunit">
    <text evidence="1">Monomer and homodimer. Part of the essential Sec protein translocation apparatus which comprises SecA, SecYEG and auxiliary proteins SecDF-YajC and YidC.</text>
</comment>
<comment type="subcellular location">
    <subcellularLocation>
        <location evidence="1">Cell inner membrane</location>
        <topology evidence="1">Peripheral membrane protein</topology>
        <orientation evidence="1">Cytoplasmic side</orientation>
    </subcellularLocation>
    <subcellularLocation>
        <location evidence="1">Cytoplasm</location>
    </subcellularLocation>
    <text evidence="1">Distribution is 50-50.</text>
</comment>
<comment type="induction">
    <text evidence="1">Repressed under conditions of excess protein secretion capacity and derepressed when protein secretion becomes limiting. This is regulated by SecM.</text>
</comment>
<comment type="similarity">
    <text evidence="1">Belongs to the SecA family.</text>
</comment>
<sequence length="901" mass="101826">MLIKLLTKVFGSRNDRTLRRMRKAVSLINAMEPEMEKLSDDELKAKTNEFRARIEKGESVESLIPEAFAVVREASKRVFGMRHFDVQLLGGMVLNDRCIAEMRTGEGKTLTATLPAYLNALSGKGVHVVTVNDYLAQRDAENNRPLFEFLGMSVGINLPGMPAPAKREAYAADITYGTNNEYGFDYLRDNMAFSPEERVQRKLHYALVDEVDSILIDEARTPLIISGPAEDSSEMYKKVNKIIPHLIRQEKEDSDTFQGEGHFSVDEKARQVNLTERGLVLIEELLVQEGIMDEGESLYSPGNIMLMHHVTAALRAHALFTRDVDYIVKDGEVIIVDEHTGRTMQGRRWSDGLHQAVEAKEGVEIQNENQTLASITFQNYFRLYEKLAGMTGTADTEAFEFSSIYKLDTVVVPTNRPMIRKDLPDLVYMTEAEKIQAIIEDIKERTANGQPVLVGTISIEKSEVVSRELTKAGIKHNVLNAKFHANEAGIVAQAGYPAAVTIATNMAGRGTDIMLGGSWQAEVAALEAPTEEQIAQIKADWQVRHDAVLAAGGLHIIGTERHESRRIDNQLRGRSGRQGDPGSSRFYLSMEDALMRIFASDRVSGMMRKLGMKPGEAIEHPWVTKAIANAQRKVESRNFDIRKQLLEYDDVANDQRRAIYTQRNELLDVSDVSDTINSIREDVFKATIDAYIPPQSLEEMWDIPGLQERLKNDFDLEMPIAEWLDKEPELHEETLRERILAQSIEVYQRKEEVVGAEMMRHFEKGVMLQTLDSLWKEHLAAMDYLRQGIHLRGYAQKDPKQEYKRESFAMFAAMLESLKYEVISTLSKVQVRMPEEVEAMEMQRREEAERLAQMQQLSHQDDDAAVAADLAAQTGERKIGRNDPCPCGSGKKYKQCHGRLS</sequence>
<evidence type="ECO:0000255" key="1">
    <source>
        <dbReference type="HAMAP-Rule" id="MF_01382"/>
    </source>
</evidence>
<name>SECA_SALPC</name>
<protein>
    <recommendedName>
        <fullName evidence="1">Protein translocase subunit SecA</fullName>
        <ecNumber evidence="1">7.4.2.8</ecNumber>
    </recommendedName>
</protein>
<reference key="1">
    <citation type="journal article" date="2009" name="PLoS ONE">
        <title>Salmonella paratyphi C: genetic divergence from Salmonella choleraesuis and pathogenic convergence with Salmonella typhi.</title>
        <authorList>
            <person name="Liu W.-Q."/>
            <person name="Feng Y."/>
            <person name="Wang Y."/>
            <person name="Zou Q.-H."/>
            <person name="Chen F."/>
            <person name="Guo J.-T."/>
            <person name="Peng Y.-H."/>
            <person name="Jin Y."/>
            <person name="Li Y.-G."/>
            <person name="Hu S.-N."/>
            <person name="Johnston R.N."/>
            <person name="Liu G.-R."/>
            <person name="Liu S.-L."/>
        </authorList>
    </citation>
    <scope>NUCLEOTIDE SEQUENCE [LARGE SCALE GENOMIC DNA]</scope>
    <source>
        <strain>RKS4594</strain>
    </source>
</reference>
<feature type="chain" id="PRO_1000184244" description="Protein translocase subunit SecA">
    <location>
        <begin position="1"/>
        <end position="901"/>
    </location>
</feature>
<feature type="binding site" evidence="1">
    <location>
        <position position="87"/>
    </location>
    <ligand>
        <name>ATP</name>
        <dbReference type="ChEBI" id="CHEBI:30616"/>
    </ligand>
</feature>
<feature type="binding site" evidence="1">
    <location>
        <begin position="105"/>
        <end position="109"/>
    </location>
    <ligand>
        <name>ATP</name>
        <dbReference type="ChEBI" id="CHEBI:30616"/>
    </ligand>
</feature>
<feature type="binding site" evidence="1">
    <location>
        <position position="512"/>
    </location>
    <ligand>
        <name>ATP</name>
        <dbReference type="ChEBI" id="CHEBI:30616"/>
    </ligand>
</feature>
<feature type="binding site" evidence="1">
    <location>
        <position position="885"/>
    </location>
    <ligand>
        <name>Zn(2+)</name>
        <dbReference type="ChEBI" id="CHEBI:29105"/>
    </ligand>
</feature>
<feature type="binding site" evidence="1">
    <location>
        <position position="887"/>
    </location>
    <ligand>
        <name>Zn(2+)</name>
        <dbReference type="ChEBI" id="CHEBI:29105"/>
    </ligand>
</feature>
<feature type="binding site" evidence="1">
    <location>
        <position position="896"/>
    </location>
    <ligand>
        <name>Zn(2+)</name>
        <dbReference type="ChEBI" id="CHEBI:29105"/>
    </ligand>
</feature>
<feature type="binding site" evidence="1">
    <location>
        <position position="897"/>
    </location>
    <ligand>
        <name>Zn(2+)</name>
        <dbReference type="ChEBI" id="CHEBI:29105"/>
    </ligand>
</feature>
<gene>
    <name evidence="1" type="primary">secA</name>
    <name type="ordered locus">SPC_0145</name>
</gene>